<accession>B4U527</accession>
<sequence>MAYRKLGRTSSQRKAMLRDLTTDLLINESIVTTEARAKEIRKTVEKMITLGKRGDLHARRQAAAYVRNEIASENYDEATDKYTSTTALQKLFSEIAPRYAERNGGYTRILKTEPRRGDAAPMAIIELV</sequence>
<evidence type="ECO:0000255" key="1">
    <source>
        <dbReference type="HAMAP-Rule" id="MF_01368"/>
    </source>
</evidence>
<evidence type="ECO:0000305" key="2"/>
<comment type="subunit">
    <text evidence="1">Part of the 50S ribosomal subunit. Contacts protein L32.</text>
</comment>
<comment type="similarity">
    <text evidence="1">Belongs to the bacterial ribosomal protein bL17 family.</text>
</comment>
<reference key="1">
    <citation type="journal article" date="2008" name="PLoS ONE">
        <title>Genome sequence of a lancefield group C Streptococcus zooepidemicus strain causing epidemic nephritis: new information about an old disease.</title>
        <authorList>
            <person name="Beres S.B."/>
            <person name="Sesso R."/>
            <person name="Pinto S.W.L."/>
            <person name="Hoe N.P."/>
            <person name="Porcella S.F."/>
            <person name="Deleo F.R."/>
            <person name="Musser J.M."/>
        </authorList>
    </citation>
    <scope>NUCLEOTIDE SEQUENCE [LARGE SCALE GENOMIC DNA]</scope>
    <source>
        <strain>MGCS10565</strain>
    </source>
</reference>
<name>RL17_STREM</name>
<dbReference type="EMBL" id="CP001129">
    <property type="protein sequence ID" value="ACG61466.1"/>
    <property type="molecule type" value="Genomic_DNA"/>
</dbReference>
<dbReference type="RefSeq" id="WP_002986602.1">
    <property type="nucleotide sequence ID" value="NC_011134.1"/>
</dbReference>
<dbReference type="SMR" id="B4U527"/>
<dbReference type="GeneID" id="83703931"/>
<dbReference type="KEGG" id="sez:Sez_0083"/>
<dbReference type="HOGENOM" id="CLU_074407_2_2_9"/>
<dbReference type="Proteomes" id="UP000001873">
    <property type="component" value="Chromosome"/>
</dbReference>
<dbReference type="GO" id="GO:0022625">
    <property type="term" value="C:cytosolic large ribosomal subunit"/>
    <property type="evidence" value="ECO:0007669"/>
    <property type="project" value="TreeGrafter"/>
</dbReference>
<dbReference type="GO" id="GO:0003735">
    <property type="term" value="F:structural constituent of ribosome"/>
    <property type="evidence" value="ECO:0007669"/>
    <property type="project" value="InterPro"/>
</dbReference>
<dbReference type="GO" id="GO:0006412">
    <property type="term" value="P:translation"/>
    <property type="evidence" value="ECO:0007669"/>
    <property type="project" value="UniProtKB-UniRule"/>
</dbReference>
<dbReference type="FunFam" id="3.90.1030.10:FF:000002">
    <property type="entry name" value="50S ribosomal protein L17"/>
    <property type="match status" value="1"/>
</dbReference>
<dbReference type="Gene3D" id="3.90.1030.10">
    <property type="entry name" value="Ribosomal protein L17"/>
    <property type="match status" value="1"/>
</dbReference>
<dbReference type="HAMAP" id="MF_01368">
    <property type="entry name" value="Ribosomal_bL17"/>
    <property type="match status" value="1"/>
</dbReference>
<dbReference type="InterPro" id="IPR000456">
    <property type="entry name" value="Ribosomal_bL17"/>
</dbReference>
<dbReference type="InterPro" id="IPR047859">
    <property type="entry name" value="Ribosomal_bL17_CS"/>
</dbReference>
<dbReference type="InterPro" id="IPR036373">
    <property type="entry name" value="Ribosomal_bL17_sf"/>
</dbReference>
<dbReference type="NCBIfam" id="TIGR00059">
    <property type="entry name" value="L17"/>
    <property type="match status" value="1"/>
</dbReference>
<dbReference type="PANTHER" id="PTHR14413:SF16">
    <property type="entry name" value="LARGE RIBOSOMAL SUBUNIT PROTEIN BL17M"/>
    <property type="match status" value="1"/>
</dbReference>
<dbReference type="PANTHER" id="PTHR14413">
    <property type="entry name" value="RIBOSOMAL PROTEIN L17"/>
    <property type="match status" value="1"/>
</dbReference>
<dbReference type="Pfam" id="PF01196">
    <property type="entry name" value="Ribosomal_L17"/>
    <property type="match status" value="1"/>
</dbReference>
<dbReference type="SUPFAM" id="SSF64263">
    <property type="entry name" value="Prokaryotic ribosomal protein L17"/>
    <property type="match status" value="1"/>
</dbReference>
<dbReference type="PROSITE" id="PS01167">
    <property type="entry name" value="RIBOSOMAL_L17"/>
    <property type="match status" value="1"/>
</dbReference>
<feature type="chain" id="PRO_1000144486" description="Large ribosomal subunit protein bL17">
    <location>
        <begin position="1"/>
        <end position="128"/>
    </location>
</feature>
<protein>
    <recommendedName>
        <fullName evidence="1">Large ribosomal subunit protein bL17</fullName>
    </recommendedName>
    <alternativeName>
        <fullName evidence="2">50S ribosomal protein L17</fullName>
    </alternativeName>
</protein>
<keyword id="KW-0687">Ribonucleoprotein</keyword>
<keyword id="KW-0689">Ribosomal protein</keyword>
<proteinExistence type="inferred from homology"/>
<organism>
    <name type="scientific">Streptococcus equi subsp. zooepidemicus (strain MGCS10565)</name>
    <dbReference type="NCBI Taxonomy" id="552526"/>
    <lineage>
        <taxon>Bacteria</taxon>
        <taxon>Bacillati</taxon>
        <taxon>Bacillota</taxon>
        <taxon>Bacilli</taxon>
        <taxon>Lactobacillales</taxon>
        <taxon>Streptococcaceae</taxon>
        <taxon>Streptococcus</taxon>
    </lineage>
</organism>
<gene>
    <name evidence="1" type="primary">rplQ</name>
    <name type="ordered locus">Sez_0083</name>
</gene>